<organism>
    <name type="scientific">Burkholderia pseudomallei (strain 1106a)</name>
    <dbReference type="NCBI Taxonomy" id="357348"/>
    <lineage>
        <taxon>Bacteria</taxon>
        <taxon>Pseudomonadati</taxon>
        <taxon>Pseudomonadota</taxon>
        <taxon>Betaproteobacteria</taxon>
        <taxon>Burkholderiales</taxon>
        <taxon>Burkholderiaceae</taxon>
        <taxon>Burkholderia</taxon>
        <taxon>pseudomallei group</taxon>
    </lineage>
</organism>
<keyword id="KW-0408">Iron</keyword>
<name>FETP_BURP0</name>
<accession>A3NX81</accession>
<evidence type="ECO:0000255" key="1">
    <source>
        <dbReference type="HAMAP-Rule" id="MF_00686"/>
    </source>
</evidence>
<comment type="function">
    <text evidence="1">Could be a mediator in iron transactions between iron acquisition and iron-requiring processes, such as synthesis and/or repair of Fe-S clusters in biosynthetic enzymes.</text>
</comment>
<comment type="similarity">
    <text evidence="1">Belongs to the Fe(2+)-trafficking protein family.</text>
</comment>
<sequence>MARMIHCAKLGKEAEGLDFPPLPGELGKRLYESVSKQAWQDWLKQQTMLINENRLNMADPRARQYLMKQTEKYFFGEGADQASGYVPPAQG</sequence>
<proteinExistence type="inferred from homology"/>
<feature type="chain" id="PRO_1000045025" description="Probable Fe(2+)-trafficking protein">
    <location>
        <begin position="1"/>
        <end position="91"/>
    </location>
</feature>
<gene>
    <name type="ordered locus">BURPS1106A_2700</name>
</gene>
<reference key="1">
    <citation type="journal article" date="2010" name="Genome Biol. Evol.">
        <title>Continuing evolution of Burkholderia mallei through genome reduction and large-scale rearrangements.</title>
        <authorList>
            <person name="Losada L."/>
            <person name="Ronning C.M."/>
            <person name="DeShazer D."/>
            <person name="Woods D."/>
            <person name="Fedorova N."/>
            <person name="Kim H.S."/>
            <person name="Shabalina S.A."/>
            <person name="Pearson T.R."/>
            <person name="Brinkac L."/>
            <person name="Tan P."/>
            <person name="Nandi T."/>
            <person name="Crabtree J."/>
            <person name="Badger J."/>
            <person name="Beckstrom-Sternberg S."/>
            <person name="Saqib M."/>
            <person name="Schutzer S.E."/>
            <person name="Keim P."/>
            <person name="Nierman W.C."/>
        </authorList>
    </citation>
    <scope>NUCLEOTIDE SEQUENCE [LARGE SCALE GENOMIC DNA]</scope>
    <source>
        <strain>1106a</strain>
    </source>
</reference>
<protein>
    <recommendedName>
        <fullName evidence="1">Probable Fe(2+)-trafficking protein</fullName>
    </recommendedName>
</protein>
<dbReference type="EMBL" id="CP000572">
    <property type="protein sequence ID" value="ABN91329.1"/>
    <property type="molecule type" value="Genomic_DNA"/>
</dbReference>
<dbReference type="RefSeq" id="WP_004193961.1">
    <property type="nucleotide sequence ID" value="NC_009076.1"/>
</dbReference>
<dbReference type="BMRB" id="A3NX81"/>
<dbReference type="SMR" id="A3NX81"/>
<dbReference type="KEGG" id="bpl:BURPS1106A_2700"/>
<dbReference type="HOGENOM" id="CLU_170994_0_0_4"/>
<dbReference type="Proteomes" id="UP000006738">
    <property type="component" value="Chromosome I"/>
</dbReference>
<dbReference type="GO" id="GO:0005829">
    <property type="term" value="C:cytosol"/>
    <property type="evidence" value="ECO:0007669"/>
    <property type="project" value="TreeGrafter"/>
</dbReference>
<dbReference type="GO" id="GO:0005506">
    <property type="term" value="F:iron ion binding"/>
    <property type="evidence" value="ECO:0007669"/>
    <property type="project" value="UniProtKB-UniRule"/>
</dbReference>
<dbReference type="GO" id="GO:0034599">
    <property type="term" value="P:cellular response to oxidative stress"/>
    <property type="evidence" value="ECO:0007669"/>
    <property type="project" value="TreeGrafter"/>
</dbReference>
<dbReference type="FunFam" id="1.10.3880.10:FF:000001">
    <property type="entry name" value="Probable Fe(2+)-trafficking protein"/>
    <property type="match status" value="1"/>
</dbReference>
<dbReference type="Gene3D" id="1.10.3880.10">
    <property type="entry name" value="Fe(II) trafficking protein YggX"/>
    <property type="match status" value="1"/>
</dbReference>
<dbReference type="HAMAP" id="MF_00686">
    <property type="entry name" value="Fe_traffic_YggX"/>
    <property type="match status" value="1"/>
</dbReference>
<dbReference type="InterPro" id="IPR007457">
    <property type="entry name" value="Fe_traffick_prot_YggX"/>
</dbReference>
<dbReference type="InterPro" id="IPR036766">
    <property type="entry name" value="Fe_traffick_prot_YggX_sf"/>
</dbReference>
<dbReference type="NCBIfam" id="NF003817">
    <property type="entry name" value="PRK05408.1"/>
    <property type="match status" value="1"/>
</dbReference>
<dbReference type="PANTHER" id="PTHR36965">
    <property type="entry name" value="FE(2+)-TRAFFICKING PROTEIN-RELATED"/>
    <property type="match status" value="1"/>
</dbReference>
<dbReference type="PANTHER" id="PTHR36965:SF1">
    <property type="entry name" value="FE(2+)-TRAFFICKING PROTEIN-RELATED"/>
    <property type="match status" value="1"/>
</dbReference>
<dbReference type="Pfam" id="PF04362">
    <property type="entry name" value="Iron_traffic"/>
    <property type="match status" value="1"/>
</dbReference>
<dbReference type="PIRSF" id="PIRSF029827">
    <property type="entry name" value="Fe_traffic_YggX"/>
    <property type="match status" value="1"/>
</dbReference>
<dbReference type="SUPFAM" id="SSF111148">
    <property type="entry name" value="YggX-like"/>
    <property type="match status" value="1"/>
</dbReference>